<dbReference type="EMBL" id="AF188360">
    <property type="protein sequence ID" value="AAF04108.1"/>
    <property type="molecule type" value="mRNA"/>
</dbReference>
<dbReference type="EMBL" id="AF188361">
    <property type="protein sequence ID" value="AAF04109.1"/>
    <property type="molecule type" value="mRNA"/>
</dbReference>
<dbReference type="EMBL" id="AF174492">
    <property type="protein sequence ID" value="AAF25614.1"/>
    <property type="status" value="ALT_INIT"/>
    <property type="molecule type" value="mRNA"/>
</dbReference>
<dbReference type="EMBL" id="AE014297">
    <property type="protein sequence ID" value="AAF55390.4"/>
    <property type="molecule type" value="Genomic_DNA"/>
</dbReference>
<dbReference type="EMBL" id="AE014297">
    <property type="protein sequence ID" value="AAN13734.1"/>
    <property type="molecule type" value="Genomic_DNA"/>
</dbReference>
<dbReference type="EMBL" id="AF183182">
    <property type="protein sequence ID" value="AAG43432.1"/>
    <property type="molecule type" value="Genomic_DNA"/>
</dbReference>
<dbReference type="RefSeq" id="NP_001262656.1">
    <molecule id="Q9VEN1-2"/>
    <property type="nucleotide sequence ID" value="NM_001275727.1"/>
</dbReference>
<dbReference type="RefSeq" id="NP_524383.3">
    <molecule id="Q9VEN1-1"/>
    <property type="nucleotide sequence ID" value="NM_079659.4"/>
</dbReference>
<dbReference type="RefSeq" id="NP_732207.1">
    <molecule id="Q9VEN1-2"/>
    <property type="nucleotide sequence ID" value="NM_169746.3"/>
</dbReference>
<dbReference type="SMR" id="Q9VEN1"/>
<dbReference type="BioGRID" id="67106">
    <property type="interactions" value="66"/>
</dbReference>
<dbReference type="FunCoup" id="Q9VEN1">
    <property type="interactions" value="281"/>
</dbReference>
<dbReference type="IntAct" id="Q9VEN1">
    <property type="interactions" value="178"/>
</dbReference>
<dbReference type="STRING" id="7227.FBpp0308015"/>
<dbReference type="PaxDb" id="7227-FBpp0304475"/>
<dbReference type="DNASU" id="42066"/>
<dbReference type="EnsemblMetazoa" id="FBtr0089471">
    <molecule id="Q9VEN1-1"/>
    <property type="protein sequence ID" value="FBpp0088478"/>
    <property type="gene ID" value="FBgn0014141"/>
</dbReference>
<dbReference type="EnsemblMetazoa" id="FBtr0089473">
    <molecule id="Q9VEN1-2"/>
    <property type="protein sequence ID" value="FBpp0088480"/>
    <property type="gene ID" value="FBgn0014141"/>
</dbReference>
<dbReference type="EnsemblMetazoa" id="FBtr0332167">
    <molecule id="Q9VEN1-2"/>
    <property type="protein sequence ID" value="FBpp0304476"/>
    <property type="gene ID" value="FBgn0014141"/>
</dbReference>
<dbReference type="GeneID" id="42066"/>
<dbReference type="KEGG" id="dme:Dmel_CG3937"/>
<dbReference type="UCSC" id="CG3937-RA">
    <molecule id="Q9VEN1-1"/>
    <property type="organism name" value="d. melanogaster"/>
</dbReference>
<dbReference type="UCSC" id="CG3937-RB">
    <property type="organism name" value="d. melanogaster"/>
</dbReference>
<dbReference type="AGR" id="FB:FBgn0014141"/>
<dbReference type="CTD" id="42066"/>
<dbReference type="FlyBase" id="FBgn0014141">
    <property type="gene designation" value="cher"/>
</dbReference>
<dbReference type="VEuPathDB" id="VectorBase:FBgn0014141"/>
<dbReference type="HOGENOM" id="CLU_000783_0_0_1"/>
<dbReference type="InParanoid" id="Q9VEN1"/>
<dbReference type="OMA" id="HMIPHFP"/>
<dbReference type="OrthoDB" id="5334309at2759"/>
<dbReference type="Reactome" id="R-DME-114608">
    <property type="pathway name" value="Platelet degranulation"/>
</dbReference>
<dbReference type="Reactome" id="R-DME-1169408">
    <property type="pathway name" value="ISG15 antiviral mechanism"/>
</dbReference>
<dbReference type="Reactome" id="R-DME-446353">
    <property type="pathway name" value="Cell-extracellular matrix interactions"/>
</dbReference>
<dbReference type="Reactome" id="R-DME-5627123">
    <property type="pathway name" value="RHO GTPases activate PAKs"/>
</dbReference>
<dbReference type="SignaLink" id="Q9VEN1"/>
<dbReference type="BioGRID-ORCS" id="42066">
    <property type="hits" value="0 hits in 3 CRISPR screens"/>
</dbReference>
<dbReference type="ChiTaRS" id="cher">
    <property type="organism name" value="fly"/>
</dbReference>
<dbReference type="GenomeRNAi" id="42066"/>
<dbReference type="PRO" id="PR:Q9VEN1"/>
<dbReference type="Proteomes" id="UP000000803">
    <property type="component" value="Chromosome 3R"/>
</dbReference>
<dbReference type="Bgee" id="FBgn0014141">
    <property type="expression patterns" value="Expressed in oviduct (Drosophila) and 117 other cell types or tissues"/>
</dbReference>
<dbReference type="ExpressionAtlas" id="Q9VEN1">
    <property type="expression patterns" value="baseline and differential"/>
</dbReference>
<dbReference type="GO" id="GO:0015629">
    <property type="term" value="C:actin cytoskeleton"/>
    <property type="evidence" value="ECO:0000314"/>
    <property type="project" value="UniProtKB"/>
</dbReference>
<dbReference type="GO" id="GO:0045179">
    <property type="term" value="C:apical cortex"/>
    <property type="evidence" value="ECO:0007005"/>
    <property type="project" value="FlyBase"/>
</dbReference>
<dbReference type="GO" id="GO:0005829">
    <property type="term" value="C:cytosol"/>
    <property type="evidence" value="ECO:0007005"/>
    <property type="project" value="FlyBase"/>
</dbReference>
<dbReference type="GO" id="GO:0035324">
    <property type="term" value="C:female germline ring canal"/>
    <property type="evidence" value="ECO:0000314"/>
    <property type="project" value="UniProtKB"/>
</dbReference>
<dbReference type="GO" id="GO:0035183">
    <property type="term" value="C:female germline ring canal inner rim"/>
    <property type="evidence" value="ECO:0000314"/>
    <property type="project" value="FlyBase"/>
</dbReference>
<dbReference type="GO" id="GO:0035182">
    <property type="term" value="C:female germline ring canal outer rim"/>
    <property type="evidence" value="ECO:0000314"/>
    <property type="project" value="FlyBase"/>
</dbReference>
<dbReference type="GO" id="GO:0005886">
    <property type="term" value="C:plasma membrane"/>
    <property type="evidence" value="ECO:0000314"/>
    <property type="project" value="UniProtKB"/>
</dbReference>
<dbReference type="GO" id="GO:0030018">
    <property type="term" value="C:Z disc"/>
    <property type="evidence" value="ECO:0000314"/>
    <property type="project" value="FlyBase"/>
</dbReference>
<dbReference type="GO" id="GO:0003779">
    <property type="term" value="F:actin binding"/>
    <property type="evidence" value="ECO:0000250"/>
    <property type="project" value="FlyBase"/>
</dbReference>
<dbReference type="GO" id="GO:0051015">
    <property type="term" value="F:actin filament binding"/>
    <property type="evidence" value="ECO:0007669"/>
    <property type="project" value="InterPro"/>
</dbReference>
<dbReference type="GO" id="GO:0051764">
    <property type="term" value="P:actin crosslink formation"/>
    <property type="evidence" value="ECO:0000315"/>
    <property type="project" value="FlyBase"/>
</dbReference>
<dbReference type="GO" id="GO:0048149">
    <property type="term" value="P:behavioral response to ethanol"/>
    <property type="evidence" value="ECO:0000315"/>
    <property type="project" value="FlyBase"/>
</dbReference>
<dbReference type="GO" id="GO:0008340">
    <property type="term" value="P:determination of adult lifespan"/>
    <property type="evidence" value="ECO:0000315"/>
    <property type="project" value="FlyBase"/>
</dbReference>
<dbReference type="GO" id="GO:0007301">
    <property type="term" value="P:female germline ring canal formation"/>
    <property type="evidence" value="ECO:0000315"/>
    <property type="project" value="FlyBase"/>
</dbReference>
<dbReference type="GO" id="GO:0008302">
    <property type="term" value="P:female germline ring canal formation, actin assembly"/>
    <property type="evidence" value="ECO:0000315"/>
    <property type="project" value="UniProtKB"/>
</dbReference>
<dbReference type="GO" id="GO:0030708">
    <property type="term" value="P:germarium-derived female germ-line cyst encapsulation"/>
    <property type="evidence" value="ECO:0000315"/>
    <property type="project" value="FlyBase"/>
</dbReference>
<dbReference type="GO" id="GO:0030725">
    <property type="term" value="P:germline ring canal formation"/>
    <property type="evidence" value="ECO:0000315"/>
    <property type="project" value="FlyBase"/>
</dbReference>
<dbReference type="GO" id="GO:0007616">
    <property type="term" value="P:long-term memory"/>
    <property type="evidence" value="ECO:0000315"/>
    <property type="project" value="FlyBase"/>
</dbReference>
<dbReference type="GO" id="GO:0000278">
    <property type="term" value="P:mitotic cell cycle"/>
    <property type="evidence" value="ECO:0007001"/>
    <property type="project" value="FlyBase"/>
</dbReference>
<dbReference type="GO" id="GO:0008045">
    <property type="term" value="P:motor neuron axon guidance"/>
    <property type="evidence" value="ECO:0000315"/>
    <property type="project" value="FlyBase"/>
</dbReference>
<dbReference type="GO" id="GO:0035204">
    <property type="term" value="P:negative regulation of lamellocyte differentiation"/>
    <property type="evidence" value="ECO:0000315"/>
    <property type="project" value="FlyBase"/>
</dbReference>
<dbReference type="GO" id="GO:0051495">
    <property type="term" value="P:positive regulation of cytoskeleton organization"/>
    <property type="evidence" value="ECO:0000315"/>
    <property type="project" value="UniProtKB"/>
</dbReference>
<dbReference type="GO" id="GO:0008104">
    <property type="term" value="P:protein localization"/>
    <property type="evidence" value="ECO:0000315"/>
    <property type="project" value="FlyBase"/>
</dbReference>
<dbReference type="GO" id="GO:0045214">
    <property type="term" value="P:sarcomere organization"/>
    <property type="evidence" value="ECO:0000315"/>
    <property type="project" value="FlyBase"/>
</dbReference>
<dbReference type="GO" id="GO:0110069">
    <property type="term" value="P:syncytial embryo cellularization"/>
    <property type="evidence" value="ECO:0000315"/>
    <property type="project" value="FlyBase"/>
</dbReference>
<dbReference type="CDD" id="cd21311">
    <property type="entry name" value="CH_dFLNA-like_rpt1"/>
    <property type="match status" value="1"/>
</dbReference>
<dbReference type="CDD" id="cd21315">
    <property type="entry name" value="CH_dFLNA-like_rpt2"/>
    <property type="match status" value="1"/>
</dbReference>
<dbReference type="FunFam" id="2.60.40.10:FF:000140">
    <property type="entry name" value="FiLamiN (Actin binding protein) homolog"/>
    <property type="match status" value="1"/>
</dbReference>
<dbReference type="FunFam" id="2.60.40.10:FF:002162">
    <property type="entry name" value="filamin-A isoform X10"/>
    <property type="match status" value="1"/>
</dbReference>
<dbReference type="FunFam" id="2.60.40.10:FF:001681">
    <property type="entry name" value="filamin-A isoform X7"/>
    <property type="match status" value="1"/>
</dbReference>
<dbReference type="FunFam" id="2.60.40.10:FF:001678">
    <property type="entry name" value="filamin-A isoform X8"/>
    <property type="match status" value="1"/>
</dbReference>
<dbReference type="FunFam" id="2.60.40.10:FF:001682">
    <property type="entry name" value="filamin-A isoform X8"/>
    <property type="match status" value="1"/>
</dbReference>
<dbReference type="FunFam" id="1.10.418.10:FF:000006">
    <property type="entry name" value="Filamin-B isoform A"/>
    <property type="match status" value="1"/>
</dbReference>
<dbReference type="FunFam" id="2.60.40.10:FF:000092">
    <property type="entry name" value="Filamin-B isoform B"/>
    <property type="match status" value="1"/>
</dbReference>
<dbReference type="FunFam" id="1.10.418.10:FF:000008">
    <property type="entry name" value="Filamin-B isoform C"/>
    <property type="match status" value="1"/>
</dbReference>
<dbReference type="FunFam" id="2.60.40.10:FF:000007">
    <property type="entry name" value="Filamin-B isoform C"/>
    <property type="match status" value="3"/>
</dbReference>
<dbReference type="FunFam" id="2.60.40.10:FF:000001">
    <property type="entry name" value="Filamin-C isoform b"/>
    <property type="match status" value="2"/>
</dbReference>
<dbReference type="FunFam" id="2.60.40.10:FF:000096">
    <property type="entry name" value="filamin-C isoform X2"/>
    <property type="match status" value="1"/>
</dbReference>
<dbReference type="Gene3D" id="1.10.418.10">
    <property type="entry name" value="Calponin-like domain"/>
    <property type="match status" value="2"/>
</dbReference>
<dbReference type="Gene3D" id="2.60.40.10">
    <property type="entry name" value="Immunoglobulins"/>
    <property type="match status" value="20"/>
</dbReference>
<dbReference type="InterPro" id="IPR001589">
    <property type="entry name" value="Actinin_actin-bd_CS"/>
</dbReference>
<dbReference type="InterPro" id="IPR001715">
    <property type="entry name" value="CH_dom"/>
</dbReference>
<dbReference type="InterPro" id="IPR036872">
    <property type="entry name" value="CH_dom_sf"/>
</dbReference>
<dbReference type="InterPro" id="IPR044801">
    <property type="entry name" value="Filamin"/>
</dbReference>
<dbReference type="InterPro" id="IPR017868">
    <property type="entry name" value="Filamin/ABP280_repeat-like"/>
</dbReference>
<dbReference type="InterPro" id="IPR001298">
    <property type="entry name" value="Filamin/ABP280_rpt"/>
</dbReference>
<dbReference type="InterPro" id="IPR013783">
    <property type="entry name" value="Ig-like_fold"/>
</dbReference>
<dbReference type="InterPro" id="IPR014756">
    <property type="entry name" value="Ig_E-set"/>
</dbReference>
<dbReference type="PANTHER" id="PTHR38537:SF8">
    <property type="entry name" value="FILAMIN-A"/>
    <property type="match status" value="1"/>
</dbReference>
<dbReference type="PANTHER" id="PTHR38537">
    <property type="entry name" value="JITTERBUG, ISOFORM N"/>
    <property type="match status" value="1"/>
</dbReference>
<dbReference type="Pfam" id="PF00307">
    <property type="entry name" value="CH"/>
    <property type="match status" value="2"/>
</dbReference>
<dbReference type="Pfam" id="PF00630">
    <property type="entry name" value="Filamin"/>
    <property type="match status" value="20"/>
</dbReference>
<dbReference type="SMART" id="SM00033">
    <property type="entry name" value="CH"/>
    <property type="match status" value="2"/>
</dbReference>
<dbReference type="SMART" id="SM00557">
    <property type="entry name" value="IG_FLMN"/>
    <property type="match status" value="20"/>
</dbReference>
<dbReference type="SUPFAM" id="SSF47576">
    <property type="entry name" value="Calponin-homology domain, CH-domain"/>
    <property type="match status" value="1"/>
</dbReference>
<dbReference type="SUPFAM" id="SSF81296">
    <property type="entry name" value="E set domains"/>
    <property type="match status" value="20"/>
</dbReference>
<dbReference type="PROSITE" id="PS00019">
    <property type="entry name" value="ACTININ_1"/>
    <property type="match status" value="1"/>
</dbReference>
<dbReference type="PROSITE" id="PS00020">
    <property type="entry name" value="ACTININ_2"/>
    <property type="match status" value="1"/>
</dbReference>
<dbReference type="PROSITE" id="PS50021">
    <property type="entry name" value="CH"/>
    <property type="match status" value="2"/>
</dbReference>
<dbReference type="PROSITE" id="PS50194">
    <property type="entry name" value="FILAMIN_REPEAT"/>
    <property type="match status" value="20"/>
</dbReference>
<name>FLNA_DROME</name>
<keyword id="KW-0009">Actin-binding</keyword>
<keyword id="KW-0025">Alternative splicing</keyword>
<keyword id="KW-1003">Cell membrane</keyword>
<keyword id="KW-0963">Cytoplasm</keyword>
<keyword id="KW-0206">Cytoskeleton</keyword>
<keyword id="KW-0472">Membrane</keyword>
<keyword id="KW-1185">Reference proteome</keyword>
<keyword id="KW-0677">Repeat</keyword>
<comment type="function">
    <text evidence="2 3">Involved in the germline ring canal formation. May tether actin microfilament within the ovarian ring canal to the cell membrane. Contributes to actin microfilaments organization.</text>
</comment>
<comment type="subunit">
    <text evidence="4">Interacts with Ten-m.</text>
</comment>
<comment type="interaction">
    <interactant intactId="EBI-133626">
        <id>Q9VEN1</id>
    </interactant>
    <interactant intactId="EBI-118556">
        <id>O61307</id>
        <label>Ten-m</label>
    </interactant>
    <organismsDiffer>false</organismsDiffer>
    <experiments>4</experiments>
</comment>
<comment type="subcellular location">
    <subcellularLocation>
        <location>Cytoplasm</location>
        <location>Cytoskeleton</location>
    </subcellularLocation>
    <subcellularLocation>
        <location>Cell membrane</location>
    </subcellularLocation>
    <text>Localizes to intercellular bridges corresponding to ring canals that connect cytoplasm of nurse cells to the developing oocyte. Localizes to nurse cell plasma membranes. Detected in both the inner and outer rims of the ring canal.</text>
</comment>
<comment type="alternative products">
    <event type="alternative splicing"/>
    <isoform>
        <id>Q9VEN1-1</id>
        <name>1</name>
        <name>Filamin A</name>
        <name>filamin 240</name>
        <sequence type="displayed"/>
    </isoform>
    <isoform>
        <id>Q9VEN1-2</id>
        <name>2</name>
        <name>Filamin B</name>
        <name>filamin 90</name>
        <sequence type="described" ref="VSP_045205"/>
    </isoform>
</comment>
<comment type="tissue specificity">
    <text evidence="2 3">Germline-specific in females (at protein level). Expressed in ovary.</text>
</comment>
<comment type="developmental stage">
    <text evidence="2 3">Expressed throughout the egg-chamber development (at protein level). Expressed in the embryo.</text>
</comment>
<comment type="disruption phenotype">
    <text evidence="2">Shows defect in ring canal assembly and female sterility.</text>
</comment>
<comment type="similarity">
    <text evidence="6">Belongs to the filamin family.</text>
</comment>
<comment type="sequence caution" evidence="6">
    <conflict type="erroneous initiation">
        <sequence resource="EMBL-CDS" id="AAF25614"/>
    </conflict>
    <text>Extended N-terminus.</text>
</comment>
<proteinExistence type="evidence at protein level"/>
<organism>
    <name type="scientific">Drosophila melanogaster</name>
    <name type="common">Fruit fly</name>
    <dbReference type="NCBI Taxonomy" id="7227"/>
    <lineage>
        <taxon>Eukaryota</taxon>
        <taxon>Metazoa</taxon>
        <taxon>Ecdysozoa</taxon>
        <taxon>Arthropoda</taxon>
        <taxon>Hexapoda</taxon>
        <taxon>Insecta</taxon>
        <taxon>Pterygota</taxon>
        <taxon>Neoptera</taxon>
        <taxon>Endopterygota</taxon>
        <taxon>Diptera</taxon>
        <taxon>Brachycera</taxon>
        <taxon>Muscomorpha</taxon>
        <taxon>Ephydroidea</taxon>
        <taxon>Drosophilidae</taxon>
        <taxon>Drosophila</taxon>
        <taxon>Sophophora</taxon>
    </lineage>
</organism>
<gene>
    <name type="primary">cher</name>
    <name type="synonym">cheerio</name>
    <name type="synonym">sko</name>
    <name type="ORF">CG3937</name>
</gene>
<feature type="chain" id="PRO_0000421126" description="Filamin-A">
    <location>
        <begin position="1"/>
        <end position="2210"/>
    </location>
</feature>
<feature type="domain" description="Calponin-homology (CH) 1" evidence="1">
    <location>
        <begin position="15"/>
        <end position="120"/>
    </location>
</feature>
<feature type="domain" description="Calponin-homology (CH) 2" evidence="1">
    <location>
        <begin position="139"/>
        <end position="242"/>
    </location>
</feature>
<feature type="repeat" description="Filamin 1">
    <location>
        <begin position="249"/>
        <end position="347"/>
    </location>
</feature>
<feature type="repeat" description="Filamin 2">
    <location>
        <begin position="349"/>
        <end position="447"/>
    </location>
</feature>
<feature type="repeat" description="Filamin 3">
    <location>
        <begin position="448"/>
        <end position="544"/>
    </location>
</feature>
<feature type="repeat" description="Filamin 4">
    <location>
        <begin position="545"/>
        <end position="635"/>
    </location>
</feature>
<feature type="repeat" description="Filamin 5">
    <location>
        <begin position="638"/>
        <end position="734"/>
    </location>
</feature>
<feature type="repeat" description="Filamin 6">
    <location>
        <begin position="735"/>
        <end position="831"/>
    </location>
</feature>
<feature type="repeat" description="Filamin 7">
    <location>
        <begin position="832"/>
        <end position="929"/>
    </location>
</feature>
<feature type="repeat" description="Filamin 8">
    <location>
        <begin position="930"/>
        <end position="1022"/>
    </location>
</feature>
<feature type="repeat" description="Filamin 9">
    <location>
        <begin position="1023"/>
        <end position="1121"/>
    </location>
</feature>
<feature type="repeat" description="Filamin 10">
    <location>
        <begin position="1122"/>
        <end position="1217"/>
    </location>
</feature>
<feature type="repeat" description="Filamin 11">
    <location>
        <begin position="1218"/>
        <end position="1312"/>
    </location>
</feature>
<feature type="repeat" description="Filamin 12">
    <location>
        <begin position="1322"/>
        <end position="1423"/>
    </location>
</feature>
<feature type="repeat" description="Filamin 13">
    <location>
        <begin position="1424"/>
        <end position="1515"/>
    </location>
</feature>
<feature type="repeat" description="Filamin 14">
    <location>
        <begin position="1516"/>
        <end position="1603"/>
    </location>
</feature>
<feature type="repeat" description="Filamin 15">
    <location>
        <begin position="1606"/>
        <end position="1698"/>
    </location>
</feature>
<feature type="repeat" description="Filamin 16">
    <location>
        <begin position="1699"/>
        <end position="1796"/>
    </location>
</feature>
<feature type="repeat" description="Filamin 17">
    <location>
        <begin position="1799"/>
        <end position="1891"/>
    </location>
</feature>
<feature type="repeat" description="Filamin 18">
    <location>
        <begin position="1893"/>
        <end position="1986"/>
    </location>
</feature>
<feature type="repeat" description="Filamin 19">
    <location>
        <begin position="1988"/>
        <end position="2079"/>
    </location>
</feature>
<feature type="repeat" description="Filamin 20">
    <location>
        <begin position="2116"/>
        <end position="2210"/>
    </location>
</feature>
<feature type="splice variant" id="VSP_045205" description="In isoform 2." evidence="5">
    <location>
        <begin position="1"/>
        <end position="1372"/>
    </location>
</feature>
<sequence>MEAERDLAEDAQWKKIQQNTFTRWANEHLKTIDRSINNLETDLSDGLRLIALIEVLSQKRMPKYNKRPTFRSQKLENVSVALKFLQDEGIKIVNIDSSDIVDCKLKLILGLIWTLILHYSISMPMWDGEDDKQLNGSGHTPKQRLLNWIHAKIPDLPINNFTNDWTTGKAVGALVDACAPGLCPDWELWDPKDAVQNASEAMGLADDWLNVRQLIKPEELVNPNVDEQSMMTYLSQYPNSKLKTGAPLRPKTNPNRVRAYGPGIEPIGPVVGAPANFTVETFSAGKGSVDVDIQGPNGEIEKADVRFNNDKNLTYTVSYIPKSEGSHKVAVKFSGRDIPKSPFPVKVEGHAGDASKVKVTGPGIQPNGVTIKKPTFFDILAKDAGRGVPEVIIIDPANHKTSVAAKVRQLENDTWRCEYVTALQGLHSVNVFYAGTPIPNSPFPVKVAPLSDARKVRASGRGLQATGVRVGDDADFKIYTEGAGEGEPEVRVIGPGGMNQNVMQSKVDGNTYECHYYPTKEGRYVIMVTFAGQEVAKSPFEVKVGPKKESSIVAYGPGLSSGVIGYPAAFVVETNGETGALGFTVAGPSQAEIECHDNGDGSALVKYHPTAVGEYAVHILCDNEDIPKSPFIAQILPRTDFHPELVKASGPGLEKNGVTINQPTSFTVDPSKAGNAPLDVVVQDVFGTKLPVELKNNPDGTKKVTYTPTSGVPHTVEVNYGGVSTPNSPHRVYVGVPVDAAKVQAFGPWLQPGVRPNAATHFNVDAREAGDAELKVKIIHEETKIEVPCRIIDNEDNTYSVEVIPPSKGAYTTTMTYGGQRVPLGEKVVVEQTVDVSKIKVDGLEPSVIMNAATDFMVDMSKVGSNIDSGKLSCAIFDPMGHVLPSKIVQGPTDDIFRIMYTPFEAGRHTIELMYDNIPVPGSPFVVNVKSGCDPARCKAYGPGLEKGLTNQKNKFTVETKGAGNGGLSLAIEGPSEAKMTCTDNRDGSCDVDYLATDPGEYDITIRFADKHIPGSPFRVLVEETVDPSKVKVYGPGIEHGQVRESVPTFFNVDVGEAGPGRIAVKLTNSEGIPVDNLRVEDKGNCIYAVHYVPPKAGSVLTCQVKFSEVEVPCSPFVMTVFPKSEPTKVKVKGVNEKKKTPASLPAEFEIDTKQAGQADINVAIKNPKGKAMQPRLEEVSTGTYVVSFVPDECGTYQCSIKYGDKEIEGSPFKLEAFPTGEAKKCKLVEQAPKIQTSGSQSHLKVDAREAGDGAVTCKITNKAGSEIVDIDVIEKDGFFDILYALNDPGDYDINVKFGGKDIPNGSFSIKAVESIEQYSHSEYIEEHTTKVVQQTTQSELVNGKSEITYRSVAFEKLPLPTTGGNVTAEVRMPSGKVDKPVIQDNRDGTVSVKYDPREEGSHELVVKYNGEPVQGSPFKFHVDSITSGYVTAYGPGLTHGVTGEPANFTISTKGASAGGLTMAVEGPSKADINYHDNKDGTVSVQYLPTAPGEYQVSVRFGDKHIKGSPYFAKITGEGRKRNQISVGSCSEVTMPGDITDDDLRALNASIQAPSGLEEPCFLKRMPTGNIGISFTPREIGEHLVSVKRLGKHINNSPFKVTVCEREVGDAKKVKVSGTGLKEGQTHADNIFSVDTRNAGFGGLSVSIEGPSKAEIQCTDKDDGTLNISYKPTEPGYYIVNLKFADHHVEGSPFTVKVAGEGSNRKREKIQRERDAVPITEIGSQCKLTFKMPGITSFDLAACVTSPSNVTEDAEIQEVEDGLYAVHFVPKELGVHTVSVRYSEMHIPGSPFQFTVGPLRDSGSHLVKAGGSGLERGVVGEAAEFNVWTREAGGGSLAISVEGPSKADIEFKDRKDGSCDVSYKVTEPGEYRVGLKFNDRHIPDSPFKVYVSPDAGDAHKLEVQQFPQGNIQADAPYQFMVRKNGAKGELDAKIVAPSGTDDDCFIQVIDGEMYSVRFYPRENGIHAIHVKFNGVHIPDSPFRIKVGKDVADPAAVHASGNGLDEVKTGHKADFIINTCNAGVGTLAVSIDGPSKVAMDCTEVEEGYKVRYTPLLPGEHYITVKYNNMHIVGSPFKVNATGDKLADEGAQETSTVIVETVQKVAKGGKNTGVHLPTFKSDASKVVSKGMGLKKAYIGKQNQFSISATDAGNNILYVGMYGPKGPCEEFHVKHAGHNNYNVQYLVRDRGQYVLLIKWGEEHIPGSPFQIDV</sequence>
<reference key="1">
    <citation type="journal article" date="1999" name="Curr. Biol.">
        <title>Drosophila filamin encoded by the cheerio locus is a component of ovarian ring canals.</title>
        <authorList>
            <person name="Sokol N.S."/>
            <person name="Cooley L."/>
        </authorList>
    </citation>
    <scope>NUCLEOTIDE SEQUENCE [MRNA] (ISOFORMS 1 AND 2)</scope>
    <scope>FUNCTION</scope>
    <scope>TISSUE SPECIFICITY</scope>
    <scope>DEVELOPMENTAL STAGE</scope>
    <scope>SUBCELLULAR LOCATION</scope>
</reference>
<reference key="2">
    <citation type="journal article" date="1999" name="J. Cell Biol.">
        <title>Filamin is required for ring canal assembly and actin organization during Drosophila oogenesis.</title>
        <authorList>
            <person name="Li M.G."/>
            <person name="Serr M."/>
            <person name="Edwards K."/>
            <person name="Ludmann S."/>
            <person name="Yamamoto D."/>
            <person name="Tilney L.G."/>
            <person name="Field C.M."/>
            <person name="Hays T.S."/>
        </authorList>
    </citation>
    <scope>NUCLEOTIDE SEQUENCE [MRNA] (ISOFORM 1)</scope>
    <scope>FUNCTION</scope>
    <scope>TISSUE SPECIFICITY</scope>
    <scope>DEVELOPMENTAL STAGE</scope>
    <scope>SUBCELLULAR LOCATION</scope>
    <scope>DISRUPTION PHENOTYPE</scope>
</reference>
<reference key="3">
    <citation type="journal article" date="2000" name="Science">
        <title>The genome sequence of Drosophila melanogaster.</title>
        <authorList>
            <person name="Adams M.D."/>
            <person name="Celniker S.E."/>
            <person name="Holt R.A."/>
            <person name="Evans C.A."/>
            <person name="Gocayne J.D."/>
            <person name="Amanatides P.G."/>
            <person name="Scherer S.E."/>
            <person name="Li P.W."/>
            <person name="Hoskins R.A."/>
            <person name="Galle R.F."/>
            <person name="George R.A."/>
            <person name="Lewis S.E."/>
            <person name="Richards S."/>
            <person name="Ashburner M."/>
            <person name="Henderson S.N."/>
            <person name="Sutton G.G."/>
            <person name="Wortman J.R."/>
            <person name="Yandell M.D."/>
            <person name="Zhang Q."/>
            <person name="Chen L.X."/>
            <person name="Brandon R.C."/>
            <person name="Rogers Y.-H.C."/>
            <person name="Blazej R.G."/>
            <person name="Champe M."/>
            <person name="Pfeiffer B.D."/>
            <person name="Wan K.H."/>
            <person name="Doyle C."/>
            <person name="Baxter E.G."/>
            <person name="Helt G."/>
            <person name="Nelson C.R."/>
            <person name="Miklos G.L.G."/>
            <person name="Abril J.F."/>
            <person name="Agbayani A."/>
            <person name="An H.-J."/>
            <person name="Andrews-Pfannkoch C."/>
            <person name="Baldwin D."/>
            <person name="Ballew R.M."/>
            <person name="Basu A."/>
            <person name="Baxendale J."/>
            <person name="Bayraktaroglu L."/>
            <person name="Beasley E.M."/>
            <person name="Beeson K.Y."/>
            <person name="Benos P.V."/>
            <person name="Berman B.P."/>
            <person name="Bhandari D."/>
            <person name="Bolshakov S."/>
            <person name="Borkova D."/>
            <person name="Botchan M.R."/>
            <person name="Bouck J."/>
            <person name="Brokstein P."/>
            <person name="Brottier P."/>
            <person name="Burtis K.C."/>
            <person name="Busam D.A."/>
            <person name="Butler H."/>
            <person name="Cadieu E."/>
            <person name="Center A."/>
            <person name="Chandra I."/>
            <person name="Cherry J.M."/>
            <person name="Cawley S."/>
            <person name="Dahlke C."/>
            <person name="Davenport L.B."/>
            <person name="Davies P."/>
            <person name="de Pablos B."/>
            <person name="Delcher A."/>
            <person name="Deng Z."/>
            <person name="Mays A.D."/>
            <person name="Dew I."/>
            <person name="Dietz S.M."/>
            <person name="Dodson K."/>
            <person name="Doup L.E."/>
            <person name="Downes M."/>
            <person name="Dugan-Rocha S."/>
            <person name="Dunkov B.C."/>
            <person name="Dunn P."/>
            <person name="Durbin K.J."/>
            <person name="Evangelista C.C."/>
            <person name="Ferraz C."/>
            <person name="Ferriera S."/>
            <person name="Fleischmann W."/>
            <person name="Fosler C."/>
            <person name="Gabrielian A.E."/>
            <person name="Garg N.S."/>
            <person name="Gelbart W.M."/>
            <person name="Glasser K."/>
            <person name="Glodek A."/>
            <person name="Gong F."/>
            <person name="Gorrell J.H."/>
            <person name="Gu Z."/>
            <person name="Guan P."/>
            <person name="Harris M."/>
            <person name="Harris N.L."/>
            <person name="Harvey D.A."/>
            <person name="Heiman T.J."/>
            <person name="Hernandez J.R."/>
            <person name="Houck J."/>
            <person name="Hostin D."/>
            <person name="Houston K.A."/>
            <person name="Howland T.J."/>
            <person name="Wei M.-H."/>
            <person name="Ibegwam C."/>
            <person name="Jalali M."/>
            <person name="Kalush F."/>
            <person name="Karpen G.H."/>
            <person name="Ke Z."/>
            <person name="Kennison J.A."/>
            <person name="Ketchum K.A."/>
            <person name="Kimmel B.E."/>
            <person name="Kodira C.D."/>
            <person name="Kraft C.L."/>
            <person name="Kravitz S."/>
            <person name="Kulp D."/>
            <person name="Lai Z."/>
            <person name="Lasko P."/>
            <person name="Lei Y."/>
            <person name="Levitsky A.A."/>
            <person name="Li J.H."/>
            <person name="Li Z."/>
            <person name="Liang Y."/>
            <person name="Lin X."/>
            <person name="Liu X."/>
            <person name="Mattei B."/>
            <person name="McIntosh T.C."/>
            <person name="McLeod M.P."/>
            <person name="McPherson D."/>
            <person name="Merkulov G."/>
            <person name="Milshina N.V."/>
            <person name="Mobarry C."/>
            <person name="Morris J."/>
            <person name="Moshrefi A."/>
            <person name="Mount S.M."/>
            <person name="Moy M."/>
            <person name="Murphy B."/>
            <person name="Murphy L."/>
            <person name="Muzny D.M."/>
            <person name="Nelson D.L."/>
            <person name="Nelson D.R."/>
            <person name="Nelson K.A."/>
            <person name="Nixon K."/>
            <person name="Nusskern D.R."/>
            <person name="Pacleb J.M."/>
            <person name="Palazzolo M."/>
            <person name="Pittman G.S."/>
            <person name="Pan S."/>
            <person name="Pollard J."/>
            <person name="Puri V."/>
            <person name="Reese M.G."/>
            <person name="Reinert K."/>
            <person name="Remington K."/>
            <person name="Saunders R.D.C."/>
            <person name="Scheeler F."/>
            <person name="Shen H."/>
            <person name="Shue B.C."/>
            <person name="Siden-Kiamos I."/>
            <person name="Simpson M."/>
            <person name="Skupski M.P."/>
            <person name="Smith T.J."/>
            <person name="Spier E."/>
            <person name="Spradling A.C."/>
            <person name="Stapleton M."/>
            <person name="Strong R."/>
            <person name="Sun E."/>
            <person name="Svirskas R."/>
            <person name="Tector C."/>
            <person name="Turner R."/>
            <person name="Venter E."/>
            <person name="Wang A.H."/>
            <person name="Wang X."/>
            <person name="Wang Z.-Y."/>
            <person name="Wassarman D.A."/>
            <person name="Weinstock G.M."/>
            <person name="Weissenbach J."/>
            <person name="Williams S.M."/>
            <person name="Woodage T."/>
            <person name="Worley K.C."/>
            <person name="Wu D."/>
            <person name="Yang S."/>
            <person name="Yao Q.A."/>
            <person name="Ye J."/>
            <person name="Yeh R.-F."/>
            <person name="Zaveri J.S."/>
            <person name="Zhan M."/>
            <person name="Zhang G."/>
            <person name="Zhao Q."/>
            <person name="Zheng L."/>
            <person name="Zheng X.H."/>
            <person name="Zhong F.N."/>
            <person name="Zhong W."/>
            <person name="Zhou X."/>
            <person name="Zhu S.C."/>
            <person name="Zhu X."/>
            <person name="Smith H.O."/>
            <person name="Gibbs R.A."/>
            <person name="Myers E.W."/>
            <person name="Rubin G.M."/>
            <person name="Venter J.C."/>
        </authorList>
    </citation>
    <scope>NUCLEOTIDE SEQUENCE [LARGE SCALE GENOMIC DNA]</scope>
    <source>
        <strain>Berkeley</strain>
    </source>
</reference>
<reference key="4">
    <citation type="journal article" date="2002" name="Genome Biol.">
        <title>Annotation of the Drosophila melanogaster euchromatic genome: a systematic review.</title>
        <authorList>
            <person name="Misra S."/>
            <person name="Crosby M.A."/>
            <person name="Mungall C.J."/>
            <person name="Matthews B.B."/>
            <person name="Campbell K.S."/>
            <person name="Hradecky P."/>
            <person name="Huang Y."/>
            <person name="Kaminker J.S."/>
            <person name="Millburn G.H."/>
            <person name="Prochnik S.E."/>
            <person name="Smith C.D."/>
            <person name="Tupy J.L."/>
            <person name="Whitfield E.J."/>
            <person name="Bayraktaroglu L."/>
            <person name="Berman B.P."/>
            <person name="Bettencourt B.R."/>
            <person name="Celniker S.E."/>
            <person name="de Grey A.D.N.J."/>
            <person name="Drysdale R.A."/>
            <person name="Harris N.L."/>
            <person name="Richter J."/>
            <person name="Russo S."/>
            <person name="Schroeder A.J."/>
            <person name="Shu S.Q."/>
            <person name="Stapleton M."/>
            <person name="Yamada C."/>
            <person name="Ashburner M."/>
            <person name="Gelbart W.M."/>
            <person name="Rubin G.M."/>
            <person name="Lewis S.E."/>
        </authorList>
    </citation>
    <scope>GENOME REANNOTATION</scope>
    <source>
        <strain>Berkeley</strain>
    </source>
</reference>
<reference key="5">
    <citation type="journal article" date="2011" name="PLoS ONE">
        <title>Drosophila Ten-m and filamin affect motor neuron growth cone guidance.</title>
        <authorList>
            <person name="Zheng L."/>
            <person name="Michelson Y."/>
            <person name="Freger V."/>
            <person name="Avraham Z."/>
            <person name="Venken K.J."/>
            <person name="Bellen H.J."/>
            <person name="Justice M.J."/>
            <person name="Wides R."/>
        </authorList>
    </citation>
    <scope>INTERACTION WITH TEN-M</scope>
</reference>
<accession>Q9VEN1</accession>
<accession>Q7KJX2</accession>
<accession>Q7KKC2</accession>
<accession>Q9GQV1</accession>
<accession>Q9U4I3</accession>
<accession>Q9U6C0</accession>
<accession>Q9U6C1</accession>
<evidence type="ECO:0000255" key="1">
    <source>
        <dbReference type="PROSITE-ProRule" id="PRU00044"/>
    </source>
</evidence>
<evidence type="ECO:0000269" key="2">
    <source>
    </source>
</evidence>
<evidence type="ECO:0000269" key="3">
    <source>
    </source>
</evidence>
<evidence type="ECO:0000269" key="4">
    <source>
    </source>
</evidence>
<evidence type="ECO:0000303" key="5">
    <source>
    </source>
</evidence>
<evidence type="ECO:0000305" key="6"/>
<protein>
    <recommendedName>
        <fullName>Filamin-A</fullName>
        <shortName>FLN-A</shortName>
    </recommendedName>
    <alternativeName>
        <fullName>Actin-binding protein 280</fullName>
        <shortName>ABP-280</shortName>
    </alternativeName>
    <alternativeName>
        <fullName>Filamin-1</fullName>
    </alternativeName>
    <alternativeName>
        <fullName>Filamin1</fullName>
    </alternativeName>
</protein>